<gene>
    <name evidence="1" type="primary">potA</name>
    <name type="ordered locus">SPA1624</name>
</gene>
<organism>
    <name type="scientific">Salmonella paratyphi A (strain ATCC 9150 / SARB42)</name>
    <dbReference type="NCBI Taxonomy" id="295319"/>
    <lineage>
        <taxon>Bacteria</taxon>
        <taxon>Pseudomonadati</taxon>
        <taxon>Pseudomonadota</taxon>
        <taxon>Gammaproteobacteria</taxon>
        <taxon>Enterobacterales</taxon>
        <taxon>Enterobacteriaceae</taxon>
        <taxon>Salmonella</taxon>
    </lineage>
</organism>
<name>POTA_SALPA</name>
<protein>
    <recommendedName>
        <fullName evidence="1">Spermidine/putrescine import ATP-binding protein PotA</fullName>
        <ecNumber evidence="1">7.6.2.11</ecNumber>
    </recommendedName>
</protein>
<accession>Q5PMK1</accession>
<keyword id="KW-0067">ATP-binding</keyword>
<keyword id="KW-0997">Cell inner membrane</keyword>
<keyword id="KW-1003">Cell membrane</keyword>
<keyword id="KW-0472">Membrane</keyword>
<keyword id="KW-0547">Nucleotide-binding</keyword>
<keyword id="KW-1278">Translocase</keyword>
<keyword id="KW-0813">Transport</keyword>
<dbReference type="EC" id="7.6.2.11" evidence="1"/>
<dbReference type="EMBL" id="CP000026">
    <property type="protein sequence ID" value="AAV77551.1"/>
    <property type="molecule type" value="Genomic_DNA"/>
</dbReference>
<dbReference type="RefSeq" id="WP_000531582.1">
    <property type="nucleotide sequence ID" value="NC_006511.1"/>
</dbReference>
<dbReference type="SMR" id="Q5PMK1"/>
<dbReference type="KEGG" id="spt:SPA1624"/>
<dbReference type="HOGENOM" id="CLU_000604_1_1_6"/>
<dbReference type="Proteomes" id="UP000008185">
    <property type="component" value="Chromosome"/>
</dbReference>
<dbReference type="GO" id="GO:0043190">
    <property type="term" value="C:ATP-binding cassette (ABC) transporter complex"/>
    <property type="evidence" value="ECO:0007669"/>
    <property type="project" value="InterPro"/>
</dbReference>
<dbReference type="GO" id="GO:0015594">
    <property type="term" value="F:ABC-type putrescine transporter activity"/>
    <property type="evidence" value="ECO:0007669"/>
    <property type="project" value="InterPro"/>
</dbReference>
<dbReference type="GO" id="GO:0005524">
    <property type="term" value="F:ATP binding"/>
    <property type="evidence" value="ECO:0007669"/>
    <property type="project" value="UniProtKB-KW"/>
</dbReference>
<dbReference type="GO" id="GO:0016887">
    <property type="term" value="F:ATP hydrolysis activity"/>
    <property type="evidence" value="ECO:0007669"/>
    <property type="project" value="InterPro"/>
</dbReference>
<dbReference type="CDD" id="cd03300">
    <property type="entry name" value="ABC_PotA_N"/>
    <property type="match status" value="1"/>
</dbReference>
<dbReference type="FunFam" id="2.40.50.100:FF:000017">
    <property type="entry name" value="Spermidine/putrescine import ATP-binding protein PotA"/>
    <property type="match status" value="1"/>
</dbReference>
<dbReference type="FunFam" id="3.40.50.300:FF:000133">
    <property type="entry name" value="Spermidine/putrescine import ATP-binding protein PotA"/>
    <property type="match status" value="1"/>
</dbReference>
<dbReference type="Gene3D" id="2.40.50.100">
    <property type="match status" value="1"/>
</dbReference>
<dbReference type="Gene3D" id="3.40.50.300">
    <property type="entry name" value="P-loop containing nucleotide triphosphate hydrolases"/>
    <property type="match status" value="1"/>
</dbReference>
<dbReference type="InterPro" id="IPR003593">
    <property type="entry name" value="AAA+_ATPase"/>
</dbReference>
<dbReference type="InterPro" id="IPR050093">
    <property type="entry name" value="ABC_SmlMolc_Importer"/>
</dbReference>
<dbReference type="InterPro" id="IPR003439">
    <property type="entry name" value="ABC_transporter-like_ATP-bd"/>
</dbReference>
<dbReference type="InterPro" id="IPR017871">
    <property type="entry name" value="ABC_transporter-like_CS"/>
</dbReference>
<dbReference type="InterPro" id="IPR008995">
    <property type="entry name" value="Mo/tungstate-bd_C_term_dom"/>
</dbReference>
<dbReference type="InterPro" id="IPR027417">
    <property type="entry name" value="P-loop_NTPase"/>
</dbReference>
<dbReference type="InterPro" id="IPR005893">
    <property type="entry name" value="PotA-like"/>
</dbReference>
<dbReference type="InterPro" id="IPR017879">
    <property type="entry name" value="PotA_ATP-bd"/>
</dbReference>
<dbReference type="InterPro" id="IPR013611">
    <property type="entry name" value="Transp-assoc_OB_typ2"/>
</dbReference>
<dbReference type="NCBIfam" id="TIGR01187">
    <property type="entry name" value="potA"/>
    <property type="match status" value="1"/>
</dbReference>
<dbReference type="NCBIfam" id="NF006987">
    <property type="entry name" value="PRK09452.1"/>
    <property type="match status" value="1"/>
</dbReference>
<dbReference type="PANTHER" id="PTHR42781">
    <property type="entry name" value="SPERMIDINE/PUTRESCINE IMPORT ATP-BINDING PROTEIN POTA"/>
    <property type="match status" value="1"/>
</dbReference>
<dbReference type="PANTHER" id="PTHR42781:SF4">
    <property type="entry name" value="SPERMIDINE_PUTRESCINE IMPORT ATP-BINDING PROTEIN POTA"/>
    <property type="match status" value="1"/>
</dbReference>
<dbReference type="Pfam" id="PF00005">
    <property type="entry name" value="ABC_tran"/>
    <property type="match status" value="1"/>
</dbReference>
<dbReference type="Pfam" id="PF08402">
    <property type="entry name" value="TOBE_2"/>
    <property type="match status" value="1"/>
</dbReference>
<dbReference type="SMART" id="SM00382">
    <property type="entry name" value="AAA"/>
    <property type="match status" value="1"/>
</dbReference>
<dbReference type="SUPFAM" id="SSF50331">
    <property type="entry name" value="MOP-like"/>
    <property type="match status" value="1"/>
</dbReference>
<dbReference type="SUPFAM" id="SSF52540">
    <property type="entry name" value="P-loop containing nucleoside triphosphate hydrolases"/>
    <property type="match status" value="1"/>
</dbReference>
<dbReference type="PROSITE" id="PS00211">
    <property type="entry name" value="ABC_TRANSPORTER_1"/>
    <property type="match status" value="1"/>
</dbReference>
<dbReference type="PROSITE" id="PS50893">
    <property type="entry name" value="ABC_TRANSPORTER_2"/>
    <property type="match status" value="1"/>
</dbReference>
<dbReference type="PROSITE" id="PS51305">
    <property type="entry name" value="POTA"/>
    <property type="match status" value="1"/>
</dbReference>
<evidence type="ECO:0000255" key="1">
    <source>
        <dbReference type="HAMAP-Rule" id="MF_01726"/>
    </source>
</evidence>
<proteinExistence type="inferred from homology"/>
<reference key="1">
    <citation type="journal article" date="2004" name="Nat. Genet.">
        <title>Comparison of genome degradation in Paratyphi A and Typhi, human-restricted serovars of Salmonella enterica that cause typhoid.</title>
        <authorList>
            <person name="McClelland M."/>
            <person name="Sanderson K.E."/>
            <person name="Clifton S.W."/>
            <person name="Latreille P."/>
            <person name="Porwollik S."/>
            <person name="Sabo A."/>
            <person name="Meyer R."/>
            <person name="Bieri T."/>
            <person name="Ozersky P."/>
            <person name="McLellan M."/>
            <person name="Harkins C.R."/>
            <person name="Wang C."/>
            <person name="Nguyen C."/>
            <person name="Berghoff A."/>
            <person name="Elliott G."/>
            <person name="Kohlberg S."/>
            <person name="Strong C."/>
            <person name="Du F."/>
            <person name="Carter J."/>
            <person name="Kremizki C."/>
            <person name="Layman D."/>
            <person name="Leonard S."/>
            <person name="Sun H."/>
            <person name="Fulton L."/>
            <person name="Nash W."/>
            <person name="Miner T."/>
            <person name="Minx P."/>
            <person name="Delehaunty K."/>
            <person name="Fronick C."/>
            <person name="Magrini V."/>
            <person name="Nhan M."/>
            <person name="Warren W."/>
            <person name="Florea L."/>
            <person name="Spieth J."/>
            <person name="Wilson R.K."/>
        </authorList>
    </citation>
    <scope>NUCLEOTIDE SEQUENCE [LARGE SCALE GENOMIC DNA]</scope>
    <source>
        <strain>ATCC 9150 / SARB42</strain>
    </source>
</reference>
<feature type="chain" id="PRO_0000286282" description="Spermidine/putrescine import ATP-binding protein PotA">
    <location>
        <begin position="1"/>
        <end position="378"/>
    </location>
</feature>
<feature type="domain" description="ABC transporter" evidence="1">
    <location>
        <begin position="18"/>
        <end position="248"/>
    </location>
</feature>
<feature type="binding site" evidence="1">
    <location>
        <begin position="50"/>
        <end position="57"/>
    </location>
    <ligand>
        <name>ATP</name>
        <dbReference type="ChEBI" id="CHEBI:30616"/>
    </ligand>
</feature>
<comment type="function">
    <text evidence="1">Part of the ABC transporter complex PotABCD involved in spermidine/putrescine import. Responsible for energy coupling to the transport system.</text>
</comment>
<comment type="catalytic activity">
    <reaction evidence="1">
        <text>ATP + H2O + polyamine-[polyamine-binding protein]Side 1 = ADP + phosphate + polyamineSide 2 + [polyamine-binding protein]Side 1.</text>
        <dbReference type="EC" id="7.6.2.11"/>
    </reaction>
</comment>
<comment type="subunit">
    <text evidence="1">The complex is composed of two ATP-binding proteins (PotA), two transmembrane proteins (PotB and PotC) and a solute-binding protein (PotD).</text>
</comment>
<comment type="subcellular location">
    <subcellularLocation>
        <location evidence="1">Cell inner membrane</location>
        <topology evidence="1">Peripheral membrane protein</topology>
    </subcellularLocation>
</comment>
<comment type="similarity">
    <text evidence="1">Belongs to the ABC transporter superfamily. Spermidine/putrescine importer (TC 3.A.1.11.1) family.</text>
</comment>
<sequence length="378" mass="42854">MGQSKKLNKQPRSLSPLVLLSGISKSFDGKEVISQLDLTINNGEFLTLLGPSGCGKTTVLRLIAGLETVDAGHIMLDNQDITHVPAENRYVNTVFQSYALFPHMTVFENVAFGLRMQKTPAAEIAPRVTDALRMVQLEEFAQRKPHQLSGGQQQRVAIARAVVNKPRLLLLDESLSALDYKLRKQMQNELKALQRKLGITFVFVTHDQEEALTMSDRIVVMRNGVIEQDGTPREIYEEPKNLFVAGFIGEINRFDATVIERLDEQRVRASVEGRECNIYVNFAVEPGQKLNVLLRPEDLRVEEINDDNHIEGLIGYVRERNYKGMTLESVVELENGKMVMVSEFFNEDDPDFDHSLDQKMAISWVESWEVVLADEEHK</sequence>